<dbReference type="EMBL" id="AE010299">
    <property type="protein sequence ID" value="AAM04680.1"/>
    <property type="molecule type" value="Genomic_DNA"/>
</dbReference>
<dbReference type="SMR" id="Q8TRB9"/>
<dbReference type="FunCoup" id="Q8TRB9">
    <property type="interactions" value="163"/>
</dbReference>
<dbReference type="STRING" id="188937.MA_1261"/>
<dbReference type="EnsemblBacteria" id="AAM04680">
    <property type="protein sequence ID" value="AAM04680"/>
    <property type="gene ID" value="MA_1261"/>
</dbReference>
<dbReference type="KEGG" id="mac:MA_1261"/>
<dbReference type="HOGENOM" id="CLU_130502_1_0_2"/>
<dbReference type="InParanoid" id="Q8TRB9"/>
<dbReference type="PhylomeDB" id="Q8TRB9"/>
<dbReference type="Proteomes" id="UP000002487">
    <property type="component" value="Chromosome"/>
</dbReference>
<dbReference type="GO" id="GO:0022625">
    <property type="term" value="C:cytosolic large ribosomal subunit"/>
    <property type="evidence" value="ECO:0000318"/>
    <property type="project" value="GO_Central"/>
</dbReference>
<dbReference type="GO" id="GO:0003723">
    <property type="term" value="F:RNA binding"/>
    <property type="evidence" value="ECO:0000318"/>
    <property type="project" value="GO_Central"/>
</dbReference>
<dbReference type="GO" id="GO:0003735">
    <property type="term" value="F:structural constituent of ribosome"/>
    <property type="evidence" value="ECO:0000318"/>
    <property type="project" value="GO_Central"/>
</dbReference>
<dbReference type="GO" id="GO:0006412">
    <property type="term" value="P:translation"/>
    <property type="evidence" value="ECO:0007669"/>
    <property type="project" value="UniProtKB-UniRule"/>
</dbReference>
<dbReference type="Gene3D" id="3.30.1330.30">
    <property type="match status" value="1"/>
</dbReference>
<dbReference type="HAMAP" id="MF_00481">
    <property type="entry name" value="Ribosomal_eL30"/>
    <property type="match status" value="1"/>
</dbReference>
<dbReference type="InterPro" id="IPR000231">
    <property type="entry name" value="Ribosomal_eL30"/>
</dbReference>
<dbReference type="InterPro" id="IPR039109">
    <property type="entry name" value="Ribosomal_eL30-like"/>
</dbReference>
<dbReference type="InterPro" id="IPR029064">
    <property type="entry name" value="Ribosomal_eL30-like_sf"/>
</dbReference>
<dbReference type="InterPro" id="IPR022991">
    <property type="entry name" value="Ribosomal_eL30_CS"/>
</dbReference>
<dbReference type="InterPro" id="IPR004038">
    <property type="entry name" value="Ribosomal_eL8/eL30/eS12/Gad45"/>
</dbReference>
<dbReference type="NCBIfam" id="NF002172">
    <property type="entry name" value="PRK01018.1"/>
    <property type="match status" value="1"/>
</dbReference>
<dbReference type="PANTHER" id="PTHR11449">
    <property type="entry name" value="RIBOSOMAL PROTEIN L30"/>
    <property type="match status" value="1"/>
</dbReference>
<dbReference type="Pfam" id="PF01248">
    <property type="entry name" value="Ribosomal_L7Ae"/>
    <property type="match status" value="1"/>
</dbReference>
<dbReference type="SUPFAM" id="SSF55315">
    <property type="entry name" value="L30e-like"/>
    <property type="match status" value="1"/>
</dbReference>
<dbReference type="PROSITE" id="PS00993">
    <property type="entry name" value="RIBOSOMAL_L30E_2"/>
    <property type="match status" value="1"/>
</dbReference>
<feature type="chain" id="PRO_0000146146" description="Large ribosomal subunit protein eL30">
    <location>
        <begin position="1"/>
        <end position="99"/>
    </location>
</feature>
<sequence length="99" mass="10304">MMKMKINVDKSLIKAVKTGKVIVGANRTIDAAANGSAKMVVLASNCPEDIKKKIQATDIPVLEYEGTSVELGPVCGKPFTIAAMAILDVGESDILAATA</sequence>
<name>RL30E_METAC</name>
<proteinExistence type="inferred from homology"/>
<gene>
    <name evidence="1" type="primary">rpl30e</name>
    <name type="ordered locus">MA_1261</name>
</gene>
<accession>Q8TRB9</accession>
<protein>
    <recommendedName>
        <fullName evidence="1">Large ribosomal subunit protein eL30</fullName>
    </recommendedName>
    <alternativeName>
        <fullName evidence="2">50S ribosomal protein L30e</fullName>
    </alternativeName>
</protein>
<comment type="similarity">
    <text evidence="1">Belongs to the eukaryotic ribosomal protein eL30 family.</text>
</comment>
<keyword id="KW-1185">Reference proteome</keyword>
<keyword id="KW-0687">Ribonucleoprotein</keyword>
<keyword id="KW-0689">Ribosomal protein</keyword>
<evidence type="ECO:0000255" key="1">
    <source>
        <dbReference type="HAMAP-Rule" id="MF_00481"/>
    </source>
</evidence>
<evidence type="ECO:0000305" key="2"/>
<reference key="1">
    <citation type="journal article" date="2002" name="Genome Res.">
        <title>The genome of Methanosarcina acetivorans reveals extensive metabolic and physiological diversity.</title>
        <authorList>
            <person name="Galagan J.E."/>
            <person name="Nusbaum C."/>
            <person name="Roy A."/>
            <person name="Endrizzi M.G."/>
            <person name="Macdonald P."/>
            <person name="FitzHugh W."/>
            <person name="Calvo S."/>
            <person name="Engels R."/>
            <person name="Smirnov S."/>
            <person name="Atnoor D."/>
            <person name="Brown A."/>
            <person name="Allen N."/>
            <person name="Naylor J."/>
            <person name="Stange-Thomann N."/>
            <person name="DeArellano K."/>
            <person name="Johnson R."/>
            <person name="Linton L."/>
            <person name="McEwan P."/>
            <person name="McKernan K."/>
            <person name="Talamas J."/>
            <person name="Tirrell A."/>
            <person name="Ye W."/>
            <person name="Zimmer A."/>
            <person name="Barber R.D."/>
            <person name="Cann I."/>
            <person name="Graham D.E."/>
            <person name="Grahame D.A."/>
            <person name="Guss A.M."/>
            <person name="Hedderich R."/>
            <person name="Ingram-Smith C."/>
            <person name="Kuettner H.C."/>
            <person name="Krzycki J.A."/>
            <person name="Leigh J.A."/>
            <person name="Li W."/>
            <person name="Liu J."/>
            <person name="Mukhopadhyay B."/>
            <person name="Reeve J.N."/>
            <person name="Smith K."/>
            <person name="Springer T.A."/>
            <person name="Umayam L.A."/>
            <person name="White O."/>
            <person name="White R.H."/>
            <person name="de Macario E.C."/>
            <person name="Ferry J.G."/>
            <person name="Jarrell K.F."/>
            <person name="Jing H."/>
            <person name="Macario A.J.L."/>
            <person name="Paulsen I.T."/>
            <person name="Pritchett M."/>
            <person name="Sowers K.R."/>
            <person name="Swanson R.V."/>
            <person name="Zinder S.H."/>
            <person name="Lander E."/>
            <person name="Metcalf W.W."/>
            <person name="Birren B."/>
        </authorList>
    </citation>
    <scope>NUCLEOTIDE SEQUENCE [LARGE SCALE GENOMIC DNA]</scope>
    <source>
        <strain>ATCC 35395 / DSM 2834 / JCM 12185 / C2A</strain>
    </source>
</reference>
<organism>
    <name type="scientific">Methanosarcina acetivorans (strain ATCC 35395 / DSM 2834 / JCM 12185 / C2A)</name>
    <dbReference type="NCBI Taxonomy" id="188937"/>
    <lineage>
        <taxon>Archaea</taxon>
        <taxon>Methanobacteriati</taxon>
        <taxon>Methanobacteriota</taxon>
        <taxon>Stenosarchaea group</taxon>
        <taxon>Methanomicrobia</taxon>
        <taxon>Methanosarcinales</taxon>
        <taxon>Methanosarcinaceae</taxon>
        <taxon>Methanosarcina</taxon>
    </lineage>
</organism>